<protein>
    <recommendedName>
        <fullName>Autophagy-related protein 9</fullName>
    </recommendedName>
</protein>
<dbReference type="EMBL" id="AE017344">
    <property type="protein sequence ID" value="AAW43167.2"/>
    <property type="molecule type" value="Genomic_DNA"/>
</dbReference>
<dbReference type="RefSeq" id="XP_570474.1">
    <property type="nucleotide sequence ID" value="XM_570474.1"/>
</dbReference>
<dbReference type="SMR" id="P0CM40"/>
<dbReference type="FunCoup" id="P0CM40">
    <property type="interactions" value="261"/>
</dbReference>
<dbReference type="STRING" id="214684.P0CM40"/>
<dbReference type="GlyCosmos" id="P0CM40">
    <property type="glycosylation" value="2 sites, No reported glycans"/>
</dbReference>
<dbReference type="PaxDb" id="214684-P0CM40"/>
<dbReference type="eggNOG" id="KOG2173">
    <property type="taxonomic scope" value="Eukaryota"/>
</dbReference>
<dbReference type="HOGENOM" id="CLU_006200_3_0_1"/>
<dbReference type="InParanoid" id="P0CM40"/>
<dbReference type="PHI-base" id="PHI:9138"/>
<dbReference type="Proteomes" id="UP000002149">
    <property type="component" value="Chromosome 4"/>
</dbReference>
<dbReference type="GO" id="GO:0005776">
    <property type="term" value="C:autophagosome"/>
    <property type="evidence" value="ECO:0000318"/>
    <property type="project" value="GO_Central"/>
</dbReference>
<dbReference type="GO" id="GO:0030659">
    <property type="term" value="C:cytoplasmic vesicle membrane"/>
    <property type="evidence" value="ECO:0007669"/>
    <property type="project" value="UniProtKB-SubCell"/>
</dbReference>
<dbReference type="GO" id="GO:0005789">
    <property type="term" value="C:endoplasmic reticulum membrane"/>
    <property type="evidence" value="ECO:0007669"/>
    <property type="project" value="UniProtKB-SubCell"/>
</dbReference>
<dbReference type="GO" id="GO:0000139">
    <property type="term" value="C:Golgi membrane"/>
    <property type="evidence" value="ECO:0007669"/>
    <property type="project" value="UniProtKB-SubCell"/>
</dbReference>
<dbReference type="GO" id="GO:0000407">
    <property type="term" value="C:phagophore assembly site"/>
    <property type="evidence" value="ECO:0000318"/>
    <property type="project" value="GO_Central"/>
</dbReference>
<dbReference type="GO" id="GO:0034045">
    <property type="term" value="C:phagophore assembly site membrane"/>
    <property type="evidence" value="ECO:0007669"/>
    <property type="project" value="UniProtKB-SubCell"/>
</dbReference>
<dbReference type="GO" id="GO:0006869">
    <property type="term" value="P:lipid transport"/>
    <property type="evidence" value="ECO:0007669"/>
    <property type="project" value="UniProtKB-KW"/>
</dbReference>
<dbReference type="GO" id="GO:0000423">
    <property type="term" value="P:mitophagy"/>
    <property type="evidence" value="ECO:0000318"/>
    <property type="project" value="GO_Central"/>
</dbReference>
<dbReference type="GO" id="GO:0034727">
    <property type="term" value="P:piecemeal microautophagy of the nucleus"/>
    <property type="evidence" value="ECO:0000318"/>
    <property type="project" value="GO_Central"/>
</dbReference>
<dbReference type="GO" id="GO:0034497">
    <property type="term" value="P:protein localization to phagophore assembly site"/>
    <property type="evidence" value="ECO:0000318"/>
    <property type="project" value="GO_Central"/>
</dbReference>
<dbReference type="GO" id="GO:0061709">
    <property type="term" value="P:reticulophagy"/>
    <property type="evidence" value="ECO:0000318"/>
    <property type="project" value="GO_Central"/>
</dbReference>
<dbReference type="InterPro" id="IPR007241">
    <property type="entry name" value="Autophagy-rel_prot_9"/>
</dbReference>
<dbReference type="PANTHER" id="PTHR13038">
    <property type="entry name" value="APG9 AUTOPHAGY 9"/>
    <property type="match status" value="1"/>
</dbReference>
<dbReference type="PANTHER" id="PTHR13038:SF10">
    <property type="entry name" value="AUTOPHAGY-RELATED PROTEIN 9"/>
    <property type="match status" value="1"/>
</dbReference>
<dbReference type="Pfam" id="PF04109">
    <property type="entry name" value="ATG9"/>
    <property type="match status" value="1"/>
</dbReference>
<accession>P0CM40</accession>
<accession>Q55UN1</accession>
<accession>Q5KHR3</accession>
<evidence type="ECO:0000250" key="1">
    <source>
        <dbReference type="UniProtKB" id="O74312"/>
    </source>
</evidence>
<evidence type="ECO:0000250" key="2">
    <source>
        <dbReference type="UniProtKB" id="Q12142"/>
    </source>
</evidence>
<evidence type="ECO:0000255" key="3"/>
<evidence type="ECO:0000256" key="4">
    <source>
        <dbReference type="SAM" id="MobiDB-lite"/>
    </source>
</evidence>
<evidence type="ECO:0000305" key="5"/>
<organism>
    <name type="scientific">Cryptococcus neoformans var. neoformans serotype D (strain JEC21 / ATCC MYA-565)</name>
    <name type="common">Filobasidiella neoformans</name>
    <dbReference type="NCBI Taxonomy" id="214684"/>
    <lineage>
        <taxon>Eukaryota</taxon>
        <taxon>Fungi</taxon>
        <taxon>Dikarya</taxon>
        <taxon>Basidiomycota</taxon>
        <taxon>Agaricomycotina</taxon>
        <taxon>Tremellomycetes</taxon>
        <taxon>Tremellales</taxon>
        <taxon>Cryptococcaceae</taxon>
        <taxon>Cryptococcus</taxon>
        <taxon>Cryptococcus neoformans species complex</taxon>
    </lineage>
</organism>
<feature type="chain" id="PRO_0000119829" description="Autophagy-related protein 9">
    <location>
        <begin position="1"/>
        <end position="995"/>
    </location>
</feature>
<feature type="topological domain" description="Cytoplasmic" evidence="5">
    <location>
        <begin position="1"/>
        <end position="255"/>
    </location>
</feature>
<feature type="transmembrane region" description="Helical" evidence="3">
    <location>
        <begin position="256"/>
        <end position="276"/>
    </location>
</feature>
<feature type="topological domain" description="Lumenal" evidence="5">
    <location>
        <begin position="277"/>
        <end position="311"/>
    </location>
</feature>
<feature type="transmembrane region" description="Helical" evidence="3">
    <location>
        <begin position="312"/>
        <end position="332"/>
    </location>
</feature>
<feature type="topological domain" description="Cytoplasmic" evidence="5">
    <location>
        <begin position="333"/>
        <end position="516"/>
    </location>
</feature>
<feature type="intramembrane region" evidence="1">
    <location>
        <begin position="517"/>
        <end position="537"/>
    </location>
</feature>
<feature type="topological domain" description="Cytoplasmic" evidence="5">
    <location>
        <begin position="538"/>
        <end position="605"/>
    </location>
</feature>
<feature type="transmembrane region" description="Helical" evidence="3">
    <location>
        <begin position="606"/>
        <end position="626"/>
    </location>
</feature>
<feature type="topological domain" description="Lumenal" evidence="5">
    <location>
        <begin position="627"/>
        <end position="638"/>
    </location>
</feature>
<feature type="transmembrane region" description="Helical" evidence="3">
    <location>
        <begin position="639"/>
        <end position="659"/>
    </location>
</feature>
<feature type="topological domain" description="Cytoplasmic" evidence="5">
    <location>
        <begin position="660"/>
        <end position="705"/>
    </location>
</feature>
<feature type="intramembrane region" evidence="1">
    <location>
        <begin position="706"/>
        <end position="726"/>
    </location>
</feature>
<feature type="topological domain" description="Cytoplasmic" evidence="5">
    <location>
        <begin position="727"/>
        <end position="995"/>
    </location>
</feature>
<feature type="region of interest" description="Disordered" evidence="4">
    <location>
        <begin position="1"/>
        <end position="208"/>
    </location>
</feature>
<feature type="region of interest" description="Disordered" evidence="4">
    <location>
        <begin position="771"/>
        <end position="817"/>
    </location>
</feature>
<feature type="region of interest" description="Disordered" evidence="4">
    <location>
        <begin position="914"/>
        <end position="978"/>
    </location>
</feature>
<feature type="compositionally biased region" description="Polar residues" evidence="4">
    <location>
        <begin position="1"/>
        <end position="11"/>
    </location>
</feature>
<feature type="compositionally biased region" description="Low complexity" evidence="4">
    <location>
        <begin position="69"/>
        <end position="91"/>
    </location>
</feature>
<feature type="compositionally biased region" description="Polar residues" evidence="4">
    <location>
        <begin position="92"/>
        <end position="106"/>
    </location>
</feature>
<feature type="compositionally biased region" description="Polar residues" evidence="4">
    <location>
        <begin position="137"/>
        <end position="147"/>
    </location>
</feature>
<feature type="compositionally biased region" description="Basic residues" evidence="4">
    <location>
        <begin position="179"/>
        <end position="191"/>
    </location>
</feature>
<feature type="compositionally biased region" description="Low complexity" evidence="4">
    <location>
        <begin position="783"/>
        <end position="808"/>
    </location>
</feature>
<feature type="compositionally biased region" description="Basic and acidic residues" evidence="4">
    <location>
        <begin position="949"/>
        <end position="968"/>
    </location>
</feature>
<proteinExistence type="inferred from homology"/>
<sequence>MPTHNSHSQPSSEDEGPPQSIIFGDHKLPEHPPTPNSPLQQTTNPFILESDGPHRQPHQSTIYSPGPFREPSTSRSPSHSRSRSTSPANSPGHSTISALASQSGVTASAGLGMTGADTAAASSKPTFREVPVPLSPTALSRQTSKSPAKSPRMGKGEGYLDPTILSVASGSRNSGKGKERTRRKGGHKYHSLHVQDEEEEEPPESDALRTRGKVGLNAYEKALWKWVNVDDLDGFLQEVYDYYKGKGIYCIVLARVLNLLTTFFVIAFSTFLISCIDYSKLFSSISTAEAVGRLEDVLVAQCITKGSFAHTLFLIILSAFFIFQVASFAMSVPRLLDMYRFYTHLLGVPDADIQTLPWPEIVRLIGDIRKHNPVTSLSNGQATALADMVGNDAKAPAKKLDAHDIANRILRQENYLIALFNKDLLDLRVRIPVPHVLTAFIPSSILISSADAPLPSLQSEPERKFLSFGANHLTKALEWNLRFCLLGYLFDRRGQVRKEFVREKRRKDLVQGLRRRFIFMGILNAIFAPFIILYLLIYSFFRYFEEYHKNPSSIGSRQYTPYAQWKFREFNELPHLFERRLDRSYEIAKEYVDQFPKERTALVMRFVAFIAGSFAAVLLVASLIDPDLFLHFEITPHRTVLFYLGVFGSILAISRGMVPQENMVFDPEASLNEVVRWTHYLPVEWRGQLHSQMVHQEFSKLFALKIMIFFSELLSVILTPFILFFSLPPCAAAIIDFFREFTVHVDGVGYVCSFAVFDFARYGNVDANQPETGLEGATGPDGGPAADGFAAGKPSRPTTRRTTSSSPSRLKHRDWRGNENKMEQSFLHFKATHPDWQPSDPSSSLFLDRLMGAGTRNRHGGGPVSAATGGISGSIYGGGGGGVGGRGLGVDGSVMAEMEEERLRAKRQSYERAWAKSSHLHRPDSSHSHPLRHPHSAASEIIEEEEGGEGDKGDDSIDGWSKRVKTDGETDDEEERERLWKDEGVVGLLQQVLGR</sequence>
<reference key="1">
    <citation type="journal article" date="2005" name="Science">
        <title>The genome of the basidiomycetous yeast and human pathogen Cryptococcus neoformans.</title>
        <authorList>
            <person name="Loftus B.J."/>
            <person name="Fung E."/>
            <person name="Roncaglia P."/>
            <person name="Rowley D."/>
            <person name="Amedeo P."/>
            <person name="Bruno D."/>
            <person name="Vamathevan J."/>
            <person name="Miranda M."/>
            <person name="Anderson I.J."/>
            <person name="Fraser J.A."/>
            <person name="Allen J.E."/>
            <person name="Bosdet I.E."/>
            <person name="Brent M.R."/>
            <person name="Chiu R."/>
            <person name="Doering T.L."/>
            <person name="Donlin M.J."/>
            <person name="D'Souza C.A."/>
            <person name="Fox D.S."/>
            <person name="Grinberg V."/>
            <person name="Fu J."/>
            <person name="Fukushima M."/>
            <person name="Haas B.J."/>
            <person name="Huang J.C."/>
            <person name="Janbon G."/>
            <person name="Jones S.J.M."/>
            <person name="Koo H.L."/>
            <person name="Krzywinski M.I."/>
            <person name="Kwon-Chung K.J."/>
            <person name="Lengeler K.B."/>
            <person name="Maiti R."/>
            <person name="Marra M.A."/>
            <person name="Marra R.E."/>
            <person name="Mathewson C.A."/>
            <person name="Mitchell T.G."/>
            <person name="Pertea M."/>
            <person name="Riggs F.R."/>
            <person name="Salzberg S.L."/>
            <person name="Schein J.E."/>
            <person name="Shvartsbeyn A."/>
            <person name="Shin H."/>
            <person name="Shumway M."/>
            <person name="Specht C.A."/>
            <person name="Suh B.B."/>
            <person name="Tenney A."/>
            <person name="Utterback T.R."/>
            <person name="Wickes B.L."/>
            <person name="Wortman J.R."/>
            <person name="Wye N.H."/>
            <person name="Kronstad J.W."/>
            <person name="Lodge J.K."/>
            <person name="Heitman J."/>
            <person name="Davis R.W."/>
            <person name="Fraser C.M."/>
            <person name="Hyman R.W."/>
        </authorList>
    </citation>
    <scope>NUCLEOTIDE SEQUENCE [LARGE SCALE GENOMIC DNA]</scope>
    <source>
        <strain>JEC21 / ATCC MYA-565</strain>
    </source>
</reference>
<name>ATG9_CRYNJ</name>
<comment type="function">
    <text evidence="2">Phospholipid scramblase involved in autophagy and cytoplasm to vacuole transport (Cvt) vesicle formation. Cycles between the preautophagosomal structure/phagophore assembly site (PAS) and the cytoplasmic vesicle pool and supplies membrane for the growing autophagosome. Lipid scramblase activity plays a key role in preautophagosomal structure/phagophore assembly by distributing the phospholipids that arrive through ATG2 from the cytoplasmic to the luminal leaflet of the bilayer, thereby driving autophagosomal membrane expansion. Required for mitophagy. Also involved in endoplasmic reticulum-specific autophagic process and is essential for the survival of cells subjected to severe ER stress. Different machineries are required for anterograde trafficking to the PAS during either the Cvt pathway or bulk autophagy and for retrograde trafficking.</text>
</comment>
<comment type="catalytic activity">
    <reaction evidence="2">
        <text>a 1,2-diacyl-sn-glycero-3-phosphocholine(in) = a 1,2-diacyl-sn-glycero-3-phosphocholine(out)</text>
        <dbReference type="Rhea" id="RHEA:38571"/>
        <dbReference type="ChEBI" id="CHEBI:57643"/>
    </reaction>
</comment>
<comment type="catalytic activity">
    <reaction evidence="2">
        <text>a 1,2-diacyl-sn-glycero-3-phospho-L-serine(in) = a 1,2-diacyl-sn-glycero-3-phospho-L-serine(out)</text>
        <dbReference type="Rhea" id="RHEA:38663"/>
        <dbReference type="ChEBI" id="CHEBI:57262"/>
    </reaction>
</comment>
<comment type="catalytic activity">
    <reaction evidence="2">
        <text>a 1,2-diacyl-sn-glycero-3-phosphoethanolamine(in) = a 1,2-diacyl-sn-glycero-3-phosphoethanolamine(out)</text>
        <dbReference type="Rhea" id="RHEA:38895"/>
        <dbReference type="ChEBI" id="CHEBI:64612"/>
    </reaction>
</comment>
<comment type="catalytic activity">
    <reaction evidence="2">
        <text>a 1,2-diacyl-sn-glycero-3-phospho-(1D-myo-inositol-3-phosphate)(in) = a 1,2-diacyl-sn-glycero-3-phospho-(1D-myo-inositol-3-phosphate)(out)</text>
        <dbReference type="Rhea" id="RHEA:67920"/>
        <dbReference type="ChEBI" id="CHEBI:58088"/>
    </reaction>
</comment>
<comment type="subunit">
    <text evidence="1">Homotrimer; forms a homotrimer with a central pore that forms a path between the two membrane leaflets.</text>
</comment>
<comment type="subcellular location">
    <subcellularLocation>
        <location evidence="2">Preautophagosomal structure membrane</location>
        <topology evidence="2">Multi-pass membrane protein</topology>
    </subcellularLocation>
    <subcellularLocation>
        <location evidence="2">Cytoplasmic vesicle membrane</location>
        <topology evidence="2">Multi-pass membrane protein</topology>
    </subcellularLocation>
    <subcellularLocation>
        <location evidence="2">Golgi apparatus membrane</location>
        <topology evidence="2">Multi-pass membrane protein</topology>
    </subcellularLocation>
    <subcellularLocation>
        <location evidence="2">Endoplasmic reticulum membrane</location>
        <topology evidence="2">Multi-pass membrane protein</topology>
    </subcellularLocation>
</comment>
<comment type="domain">
    <text evidence="1">Forms a homotrimer with a solvated central pore, which is connected laterally to the cytosol through the cavity within each protomer. Acts as a lipid scramblase that uses its central pore to function: the central pore opens laterally to accommodate lipid headgroups, thereby enabling lipid flipping and redistribution of lipids added to the outer leaflet of ATG9-containing vesicles, thereby enabling growth into autophagosomes.</text>
</comment>
<comment type="PTM">
    <text evidence="2">Phosphorylated by ATG1. ATG1 phosphorylation is required for preautophagosome elongation.</text>
</comment>
<comment type="similarity">
    <text evidence="5">Belongs to the ATG9 family.</text>
</comment>
<gene>
    <name type="primary">ATG9</name>
    <name type="ordered locus">CND05590</name>
</gene>
<keyword id="KW-0072">Autophagy</keyword>
<keyword id="KW-0968">Cytoplasmic vesicle</keyword>
<keyword id="KW-0256">Endoplasmic reticulum</keyword>
<keyword id="KW-0333">Golgi apparatus</keyword>
<keyword id="KW-0445">Lipid transport</keyword>
<keyword id="KW-0472">Membrane</keyword>
<keyword id="KW-0597">Phosphoprotein</keyword>
<keyword id="KW-1185">Reference proteome</keyword>
<keyword id="KW-0812">Transmembrane</keyword>
<keyword id="KW-1133">Transmembrane helix</keyword>
<keyword id="KW-0813">Transport</keyword>